<proteinExistence type="inferred from homology"/>
<reference key="1">
    <citation type="submission" date="2007-10" db="EMBL/GenBank/DDBJ databases">
        <title>Brucella canis ATCC 23365 whole genome shotgun sequencing project.</title>
        <authorList>
            <person name="Setubal J.C."/>
            <person name="Bowns C."/>
            <person name="Boyle S."/>
            <person name="Crasta O.R."/>
            <person name="Czar M.J."/>
            <person name="Dharmanolla C."/>
            <person name="Gillespie J.J."/>
            <person name="Kenyon R.W."/>
            <person name="Lu J."/>
            <person name="Mane S."/>
            <person name="Mohapatra S."/>
            <person name="Nagrani S."/>
            <person name="Purkayastha A."/>
            <person name="Rajasimha H.K."/>
            <person name="Shallom J.M."/>
            <person name="Shallom S."/>
            <person name="Shukla M."/>
            <person name="Snyder E.E."/>
            <person name="Sobral B.W."/>
            <person name="Wattam A.R."/>
            <person name="Will R."/>
            <person name="Williams K."/>
            <person name="Yoo H."/>
            <person name="Bruce D."/>
            <person name="Detter C."/>
            <person name="Munk C."/>
            <person name="Brettin T.S."/>
        </authorList>
    </citation>
    <scope>NUCLEOTIDE SEQUENCE [LARGE SCALE GENOMIC DNA]</scope>
    <source>
        <strain>ATCC 23365 / NCTC 10854 / RM-666</strain>
    </source>
</reference>
<keyword id="KW-0066">ATP synthesis</keyword>
<keyword id="KW-0997">Cell inner membrane</keyword>
<keyword id="KW-1003">Cell membrane</keyword>
<keyword id="KW-0139">CF(1)</keyword>
<keyword id="KW-0375">Hydrogen ion transport</keyword>
<keyword id="KW-0406">Ion transport</keyword>
<keyword id="KW-0472">Membrane</keyword>
<keyword id="KW-1185">Reference proteome</keyword>
<keyword id="KW-0813">Transport</keyword>
<organism>
    <name type="scientific">Brucella canis (strain ATCC 23365 / NCTC 10854 / RM-666)</name>
    <dbReference type="NCBI Taxonomy" id="483179"/>
    <lineage>
        <taxon>Bacteria</taxon>
        <taxon>Pseudomonadati</taxon>
        <taxon>Pseudomonadota</taxon>
        <taxon>Alphaproteobacteria</taxon>
        <taxon>Hyphomicrobiales</taxon>
        <taxon>Brucellaceae</taxon>
        <taxon>Brucella/Ochrobactrum group</taxon>
        <taxon>Brucella</taxon>
    </lineage>
</organism>
<sequence>MAETSSLISGVAQRYAGSLFELALDANSVASVEKDLGRFEALLSGSEDLRRLISSPVFSSEDQLHAIGAIADKAGIKGLVGNFLRVVAQNRRLFALPGIIAAFRQIAAEHRGEISADVVSAHELTSAQQNELKATLKGVAGKDVTINVTVDPSILGGLIVKMGSRQIDTSLRTKLSSLKLALKEVG</sequence>
<dbReference type="EMBL" id="CP000872">
    <property type="protein sequence ID" value="ABX62838.1"/>
    <property type="molecule type" value="Genomic_DNA"/>
</dbReference>
<dbReference type="RefSeq" id="WP_004688721.1">
    <property type="nucleotide sequence ID" value="NC_010103.1"/>
</dbReference>
<dbReference type="SMR" id="A9M840"/>
<dbReference type="GeneID" id="55591400"/>
<dbReference type="KEGG" id="bcs:BCAN_A1840"/>
<dbReference type="HOGENOM" id="CLU_085114_0_1_5"/>
<dbReference type="PhylomeDB" id="A9M840"/>
<dbReference type="Proteomes" id="UP000001385">
    <property type="component" value="Chromosome I"/>
</dbReference>
<dbReference type="GO" id="GO:0005886">
    <property type="term" value="C:plasma membrane"/>
    <property type="evidence" value="ECO:0007669"/>
    <property type="project" value="UniProtKB-SubCell"/>
</dbReference>
<dbReference type="GO" id="GO:0045259">
    <property type="term" value="C:proton-transporting ATP synthase complex"/>
    <property type="evidence" value="ECO:0007669"/>
    <property type="project" value="UniProtKB-KW"/>
</dbReference>
<dbReference type="GO" id="GO:0046933">
    <property type="term" value="F:proton-transporting ATP synthase activity, rotational mechanism"/>
    <property type="evidence" value="ECO:0007669"/>
    <property type="project" value="UniProtKB-UniRule"/>
</dbReference>
<dbReference type="Gene3D" id="1.10.520.20">
    <property type="entry name" value="N-terminal domain of the delta subunit of the F1F0-ATP synthase"/>
    <property type="match status" value="1"/>
</dbReference>
<dbReference type="HAMAP" id="MF_01416">
    <property type="entry name" value="ATP_synth_delta_bact"/>
    <property type="match status" value="1"/>
</dbReference>
<dbReference type="InterPro" id="IPR026015">
    <property type="entry name" value="ATP_synth_OSCP/delta_N_sf"/>
</dbReference>
<dbReference type="InterPro" id="IPR020781">
    <property type="entry name" value="ATPase_OSCP/d_CS"/>
</dbReference>
<dbReference type="InterPro" id="IPR000711">
    <property type="entry name" value="ATPase_OSCP/dsu"/>
</dbReference>
<dbReference type="NCBIfam" id="TIGR01145">
    <property type="entry name" value="ATP_synt_delta"/>
    <property type="match status" value="1"/>
</dbReference>
<dbReference type="NCBIfam" id="NF004402">
    <property type="entry name" value="PRK05758.2-2"/>
    <property type="match status" value="1"/>
</dbReference>
<dbReference type="NCBIfam" id="NF004406">
    <property type="entry name" value="PRK05758.3-2"/>
    <property type="match status" value="1"/>
</dbReference>
<dbReference type="PANTHER" id="PTHR11910">
    <property type="entry name" value="ATP SYNTHASE DELTA CHAIN"/>
    <property type="match status" value="1"/>
</dbReference>
<dbReference type="Pfam" id="PF00213">
    <property type="entry name" value="OSCP"/>
    <property type="match status" value="1"/>
</dbReference>
<dbReference type="PRINTS" id="PR00125">
    <property type="entry name" value="ATPASEDELTA"/>
</dbReference>
<dbReference type="SUPFAM" id="SSF47928">
    <property type="entry name" value="N-terminal domain of the delta subunit of the F1F0-ATP synthase"/>
    <property type="match status" value="1"/>
</dbReference>
<dbReference type="PROSITE" id="PS00389">
    <property type="entry name" value="ATPASE_DELTA"/>
    <property type="match status" value="1"/>
</dbReference>
<name>ATPD_BRUC2</name>
<protein>
    <recommendedName>
        <fullName evidence="1">ATP synthase subunit delta</fullName>
    </recommendedName>
    <alternativeName>
        <fullName evidence="1">ATP synthase F(1) sector subunit delta</fullName>
    </alternativeName>
    <alternativeName>
        <fullName evidence="1">F-type ATPase subunit delta</fullName>
        <shortName evidence="1">F-ATPase subunit delta</shortName>
    </alternativeName>
</protein>
<accession>A9M840</accession>
<comment type="function">
    <text evidence="1">F(1)F(0) ATP synthase produces ATP from ADP in the presence of a proton or sodium gradient. F-type ATPases consist of two structural domains, F(1) containing the extramembraneous catalytic core and F(0) containing the membrane proton channel, linked together by a central stalk and a peripheral stalk. During catalysis, ATP synthesis in the catalytic domain of F(1) is coupled via a rotary mechanism of the central stalk subunits to proton translocation.</text>
</comment>
<comment type="function">
    <text evidence="1">This protein is part of the stalk that links CF(0) to CF(1). It either transmits conformational changes from CF(0) to CF(1) or is implicated in proton conduction.</text>
</comment>
<comment type="subunit">
    <text evidence="1">F-type ATPases have 2 components, F(1) - the catalytic core - and F(0) - the membrane proton channel. F(1) has five subunits: alpha(3), beta(3), gamma(1), delta(1), epsilon(1). F(0) has three main subunits: a(1), b(2) and c(10-14). The alpha and beta chains form an alternating ring which encloses part of the gamma chain. F(1) is attached to F(0) by a central stalk formed by the gamma and epsilon chains, while a peripheral stalk is formed by the delta and b chains.</text>
</comment>
<comment type="subcellular location">
    <subcellularLocation>
        <location evidence="1">Cell inner membrane</location>
        <topology evidence="1">Peripheral membrane protein</topology>
    </subcellularLocation>
</comment>
<comment type="similarity">
    <text evidence="1">Belongs to the ATPase delta chain family.</text>
</comment>
<feature type="chain" id="PRO_0000370911" description="ATP synthase subunit delta">
    <location>
        <begin position="1"/>
        <end position="186"/>
    </location>
</feature>
<evidence type="ECO:0000255" key="1">
    <source>
        <dbReference type="HAMAP-Rule" id="MF_01416"/>
    </source>
</evidence>
<gene>
    <name evidence="1" type="primary">atpH</name>
    <name type="ordered locus">BCAN_A1840</name>
</gene>